<proteinExistence type="inferred from homology"/>
<keyword id="KW-0106">Calcium</keyword>
<keyword id="KW-0167">Capsid protein</keyword>
<keyword id="KW-1015">Disulfide bond</keyword>
<keyword id="KW-0325">Glycoprotein</keyword>
<keyword id="KW-1038">Host endoplasmic reticulum</keyword>
<keyword id="KW-0945">Host-virus interaction</keyword>
<keyword id="KW-0479">Metal-binding</keyword>
<keyword id="KW-1152">Outer capsid protein</keyword>
<keyword id="KW-0732">Signal</keyword>
<keyword id="KW-1146">T=13 icosahedral capsid protein</keyword>
<keyword id="KW-0946">Virion</keyword>
<organismHost>
    <name type="scientific">Homo sapiens</name>
    <name type="common">Human</name>
    <dbReference type="NCBI Taxonomy" id="9606"/>
</organismHost>
<organism>
    <name type="scientific">Rotavirus B (isolate RVB/Human/China/ADRV/1982)</name>
    <name type="common">RV-B</name>
    <name type="synonym">Rotavirus B (isolate adult diarrhea rotavirus)</name>
    <dbReference type="NCBI Taxonomy" id="10942"/>
    <lineage>
        <taxon>Viruses</taxon>
        <taxon>Riboviria</taxon>
        <taxon>Orthornavirae</taxon>
        <taxon>Duplornaviricota</taxon>
        <taxon>Resentoviricetes</taxon>
        <taxon>Reovirales</taxon>
        <taxon>Sedoreoviridae</taxon>
        <taxon>Rotavirus</taxon>
        <taxon>Rotavirus B</taxon>
    </lineage>
</organism>
<dbReference type="EMBL" id="M33872">
    <property type="protein sequence ID" value="AAA42675.1"/>
    <property type="molecule type" value="Genomic_RNA"/>
</dbReference>
<dbReference type="PIR" id="A37080">
    <property type="entry name" value="VGXRHB"/>
</dbReference>
<dbReference type="GO" id="GO:0044166">
    <property type="term" value="C:host cell endoplasmic reticulum lumen"/>
    <property type="evidence" value="ECO:0007669"/>
    <property type="project" value="UniProtKB-SubCell"/>
</dbReference>
<dbReference type="GO" id="GO:0016020">
    <property type="term" value="C:membrane"/>
    <property type="evidence" value="ECO:0007669"/>
    <property type="project" value="InterPro"/>
</dbReference>
<dbReference type="GO" id="GO:0039621">
    <property type="term" value="C:T=13 icosahedral viral capsid"/>
    <property type="evidence" value="ECO:0007669"/>
    <property type="project" value="UniProtKB-UniRule"/>
</dbReference>
<dbReference type="GO" id="GO:0039624">
    <property type="term" value="C:viral outer capsid"/>
    <property type="evidence" value="ECO:0007669"/>
    <property type="project" value="UniProtKB-UniRule"/>
</dbReference>
<dbReference type="GO" id="GO:0046872">
    <property type="term" value="F:metal ion binding"/>
    <property type="evidence" value="ECO:0007669"/>
    <property type="project" value="UniProtKB-KW"/>
</dbReference>
<dbReference type="HAMAP" id="MF_04130">
    <property type="entry name" value="Rota_VP7"/>
    <property type="match status" value="1"/>
</dbReference>
<dbReference type="InterPro" id="IPR008818">
    <property type="entry name" value="Rotavirus_VP7"/>
</dbReference>
<dbReference type="InterPro" id="IPR001963">
    <property type="entry name" value="VP7"/>
</dbReference>
<dbReference type="Pfam" id="PF05868">
    <property type="entry name" value="Rotavirus_VP7"/>
    <property type="match status" value="1"/>
</dbReference>
<reference key="1">
    <citation type="journal article" date="1990" name="Virology">
        <title>Identification of the gene encoding the group B rotavirus VP7 equivalent: primary characterization of the ADRV segment 9 RNA.</title>
        <authorList>
            <person name="Chen G.-M."/>
            <person name="Hung T."/>
            <person name="Mackow E.R."/>
        </authorList>
    </citation>
    <scope>NUCLEOTIDE SEQUENCE [GENOMIC RNA]</scope>
</reference>
<protein>
    <recommendedName>
        <fullName evidence="1">Outer capsid glycoprotein VP7</fullName>
    </recommendedName>
</protein>
<comment type="function">
    <text evidence="1">Calcium-binding protein that interacts with rotavirus cell receptors once the initial attachment by VP4 has been achieved. Rotavirus attachment and entry into the host cell probably involves multiple sequential contacts between the outer capsid proteins VP4 and VP7, and the cell receptors. Following entry into the host cell, low intracellular or intravesicular Ca(2+) concentration probably causes the calcium-stabilized VP7 trimers to dissociate from the virion. This step is probably necessary for the membrane-disrupting entry step and the release of VP4, which is locked onto the virion by VP7.</text>
</comment>
<comment type="subunit">
    <text evidence="1">Homotrimer; disulfide-linked. 2 Ca(2+) ions bound at each subunit interface in the trimer hold the trimer together. Interacts with the intermediate capsid protein VP6. Interacts with the outer capsid protein VP5*.</text>
</comment>
<comment type="subcellular location">
    <subcellularLocation>
        <location evidence="1">Virion</location>
    </subcellularLocation>
    <subcellularLocation>
        <location evidence="1">Host endoplasmic reticulum lumen</location>
    </subcellularLocation>
    <text evidence="1">The outer layer contains 780 copies of VP7, grouped as 260 trimers. Immature double-layered particles assembled in the cytoplasm bud across the membrane of the endoplasmic reticulum, acquiring during this process a transient lipid membrane that is modified with the ER resident viral glycoproteins NSP4 and VP7; these enveloped particles also contain VP4. As the particles move towards the interior of the ER cisternae, the transient lipid membrane and the non-structural protein NSP4 are lost, while the virus surface proteins VP4 and VP7 rearrange to form the outermost virus protein layer, yielding mature infectious triple-layered particles.</text>
</comment>
<comment type="similarity">
    <text evidence="1">Belongs to the rotavirus VP7 family.</text>
</comment>
<feature type="signal peptide" evidence="1">
    <location>
        <begin position="1"/>
        <end position="15"/>
    </location>
</feature>
<feature type="chain" id="PRO_0000041131" description="Outer capsid glycoprotein VP7" evidence="1">
    <location>
        <begin position="16"/>
        <end position="249"/>
    </location>
</feature>
<sequence>MASLLLLVLAAAVTAQLNIVPSTHPEVCVLYADDHQADANKFNGNFTQIFHSYNSITLSFMSYSSSSYDVIDIISKYDLSSCNILAIDVFNASMDFNVFLQSTNNCSKYNANKVHHVKLPRGEEWFSYSKNLKFCPLSDSLIGMYCDTQLSDTYFEISTGGTYEVTDIPEFTQMGYTFHSSEEFYLCHRISSEAWLNYHLFYRDYDVSGVISKQVNWGNVWSGFKTFAQVLYKILDLFFNSKRNVEPRA</sequence>
<accession>P18570</accession>
<evidence type="ECO:0000255" key="1">
    <source>
        <dbReference type="HAMAP-Rule" id="MF_04130"/>
    </source>
</evidence>
<name>VP7_ROTGA</name>